<organism>
    <name type="scientific">Francisella tularensis subsp. holarctica (strain OSU18)</name>
    <dbReference type="NCBI Taxonomy" id="393011"/>
    <lineage>
        <taxon>Bacteria</taxon>
        <taxon>Pseudomonadati</taxon>
        <taxon>Pseudomonadota</taxon>
        <taxon>Gammaproteobacteria</taxon>
        <taxon>Thiotrichales</taxon>
        <taxon>Francisellaceae</taxon>
        <taxon>Francisella</taxon>
    </lineage>
</organism>
<reference key="1">
    <citation type="journal article" date="2006" name="J. Bacteriol.">
        <title>Chromosome rearrangement and diversification of Francisella tularensis revealed by the type B (OSU18) genome sequence.</title>
        <authorList>
            <person name="Petrosino J.F."/>
            <person name="Xiang Q."/>
            <person name="Karpathy S.E."/>
            <person name="Jiang H."/>
            <person name="Yerrapragada S."/>
            <person name="Liu Y."/>
            <person name="Gioia J."/>
            <person name="Hemphill L."/>
            <person name="Gonzalez A."/>
            <person name="Raghavan T.M."/>
            <person name="Uzman A."/>
            <person name="Fox G.E."/>
            <person name="Highlander S."/>
            <person name="Reichard M."/>
            <person name="Morton R.J."/>
            <person name="Clinkenbeard K.D."/>
            <person name="Weinstock G.M."/>
        </authorList>
    </citation>
    <scope>NUCLEOTIDE SEQUENCE [LARGE SCALE GENOMIC DNA]</scope>
    <source>
        <strain>OSU18</strain>
    </source>
</reference>
<feature type="chain" id="PRO_1000018032" description="Arginine--tRNA ligase">
    <location>
        <begin position="1"/>
        <end position="581"/>
    </location>
</feature>
<feature type="short sequence motif" description="'HIGH' region">
    <location>
        <begin position="122"/>
        <end position="132"/>
    </location>
</feature>
<comment type="catalytic activity">
    <reaction evidence="1">
        <text>tRNA(Arg) + L-arginine + ATP = L-arginyl-tRNA(Arg) + AMP + diphosphate</text>
        <dbReference type="Rhea" id="RHEA:20301"/>
        <dbReference type="Rhea" id="RHEA-COMP:9658"/>
        <dbReference type="Rhea" id="RHEA-COMP:9673"/>
        <dbReference type="ChEBI" id="CHEBI:30616"/>
        <dbReference type="ChEBI" id="CHEBI:32682"/>
        <dbReference type="ChEBI" id="CHEBI:33019"/>
        <dbReference type="ChEBI" id="CHEBI:78442"/>
        <dbReference type="ChEBI" id="CHEBI:78513"/>
        <dbReference type="ChEBI" id="CHEBI:456215"/>
        <dbReference type="EC" id="6.1.1.19"/>
    </reaction>
</comment>
<comment type="subunit">
    <text evidence="1">Monomer.</text>
</comment>
<comment type="subcellular location">
    <subcellularLocation>
        <location evidence="1">Cytoplasm</location>
    </subcellularLocation>
</comment>
<comment type="similarity">
    <text evidence="1">Belongs to the class-I aminoacyl-tRNA synthetase family.</text>
</comment>
<evidence type="ECO:0000255" key="1">
    <source>
        <dbReference type="HAMAP-Rule" id="MF_00123"/>
    </source>
</evidence>
<proteinExistence type="inferred from homology"/>
<sequence>MNIENYLSETLAKVFQKLGYAESFAKVVTSTREDVGHFQCNGAMPLAKFAKKPPLAIAEEIVEHIDAEDIFAKLEVAKPGFINITLAPKFLADTTNRFLNSNKFGVQNNLPNRKVVLDFGGPNVAKPMHVGHIRSALLGDALQRIHRFCGDTVISDVHLGDWGTQMGMLIEEIKLQSPQLVYFDENYTGEYPTESPITVQELAEIYPRASKRCKSDINEMEKARLATFELQQGRRGYVALWQHFVRISIDAVKKDFDSLDVHFDLWLGESDANKFIDEMISYFQANNFIYEDEGAWVIDTNKDGVPPLIVIKKDGGVMYGTTDLATLWQRSKDLDPDEIIYVVDKRQSLHFKQVFSVAERTKVVSEKCKLKHVAFGTVNGKDGRPFKTREGGVMHLADLISQAKEYAKNRMPDENDDSIIDQIAMATIKFGDLINNYANDYFFDLEKFAQHEGKTGPYLLYTVVRAKSILRKIFGDNYDIKSLAKDYKVVNAHNEYEEKLQLQLIQFPIAVQRAYENSQPHHICEYAYSLANSFNKFYVNCPINNLDDESLKKARIALCMATVKAMTIASDLIGISIPERM</sequence>
<keyword id="KW-0030">Aminoacyl-tRNA synthetase</keyword>
<keyword id="KW-0067">ATP-binding</keyword>
<keyword id="KW-0963">Cytoplasm</keyword>
<keyword id="KW-0436">Ligase</keyword>
<keyword id="KW-0547">Nucleotide-binding</keyword>
<keyword id="KW-0648">Protein biosynthesis</keyword>
<protein>
    <recommendedName>
        <fullName evidence="1">Arginine--tRNA ligase</fullName>
        <ecNumber evidence="1">6.1.1.19</ecNumber>
    </recommendedName>
    <alternativeName>
        <fullName evidence="1">Arginyl-tRNA synthetase</fullName>
        <shortName evidence="1">ArgRS</shortName>
    </alternativeName>
</protein>
<name>SYR_FRATO</name>
<accession>Q0BKP4</accession>
<dbReference type="EC" id="6.1.1.19" evidence="1"/>
<dbReference type="EMBL" id="CP000437">
    <property type="protein sequence ID" value="ABI83340.1"/>
    <property type="molecule type" value="Genomic_DNA"/>
</dbReference>
<dbReference type="RefSeq" id="WP_010031328.1">
    <property type="nucleotide sequence ID" value="NC_017463.1"/>
</dbReference>
<dbReference type="SMR" id="Q0BKP4"/>
<dbReference type="KEGG" id="fth:FTH_1544"/>
<dbReference type="GO" id="GO:0005737">
    <property type="term" value="C:cytoplasm"/>
    <property type="evidence" value="ECO:0007669"/>
    <property type="project" value="UniProtKB-SubCell"/>
</dbReference>
<dbReference type="GO" id="GO:0004814">
    <property type="term" value="F:arginine-tRNA ligase activity"/>
    <property type="evidence" value="ECO:0007669"/>
    <property type="project" value="UniProtKB-UniRule"/>
</dbReference>
<dbReference type="GO" id="GO:0005524">
    <property type="term" value="F:ATP binding"/>
    <property type="evidence" value="ECO:0007669"/>
    <property type="project" value="UniProtKB-UniRule"/>
</dbReference>
<dbReference type="GO" id="GO:0006420">
    <property type="term" value="P:arginyl-tRNA aminoacylation"/>
    <property type="evidence" value="ECO:0007669"/>
    <property type="project" value="UniProtKB-UniRule"/>
</dbReference>
<dbReference type="CDD" id="cd00671">
    <property type="entry name" value="ArgRS_core"/>
    <property type="match status" value="1"/>
</dbReference>
<dbReference type="Gene3D" id="3.30.1360.70">
    <property type="entry name" value="Arginyl tRNA synthetase N-terminal domain"/>
    <property type="match status" value="1"/>
</dbReference>
<dbReference type="Gene3D" id="3.40.50.620">
    <property type="entry name" value="HUPs"/>
    <property type="match status" value="1"/>
</dbReference>
<dbReference type="Gene3D" id="1.10.730.10">
    <property type="entry name" value="Isoleucyl-tRNA Synthetase, Domain 1"/>
    <property type="match status" value="1"/>
</dbReference>
<dbReference type="HAMAP" id="MF_00123">
    <property type="entry name" value="Arg_tRNA_synth"/>
    <property type="match status" value="1"/>
</dbReference>
<dbReference type="InterPro" id="IPR001412">
    <property type="entry name" value="aa-tRNA-synth_I_CS"/>
</dbReference>
<dbReference type="InterPro" id="IPR001278">
    <property type="entry name" value="Arg-tRNA-ligase"/>
</dbReference>
<dbReference type="InterPro" id="IPR005148">
    <property type="entry name" value="Arg-tRNA-synth_N"/>
</dbReference>
<dbReference type="InterPro" id="IPR036695">
    <property type="entry name" value="Arg-tRNA-synth_N_sf"/>
</dbReference>
<dbReference type="InterPro" id="IPR035684">
    <property type="entry name" value="ArgRS_core"/>
</dbReference>
<dbReference type="InterPro" id="IPR008909">
    <property type="entry name" value="DALR_anticod-bd"/>
</dbReference>
<dbReference type="InterPro" id="IPR014729">
    <property type="entry name" value="Rossmann-like_a/b/a_fold"/>
</dbReference>
<dbReference type="InterPro" id="IPR009080">
    <property type="entry name" value="tRNAsynth_Ia_anticodon-bd"/>
</dbReference>
<dbReference type="NCBIfam" id="TIGR00456">
    <property type="entry name" value="argS"/>
    <property type="match status" value="1"/>
</dbReference>
<dbReference type="PANTHER" id="PTHR11956:SF5">
    <property type="entry name" value="ARGININE--TRNA LIGASE, CYTOPLASMIC"/>
    <property type="match status" value="1"/>
</dbReference>
<dbReference type="PANTHER" id="PTHR11956">
    <property type="entry name" value="ARGINYL-TRNA SYNTHETASE"/>
    <property type="match status" value="1"/>
</dbReference>
<dbReference type="Pfam" id="PF03485">
    <property type="entry name" value="Arg_tRNA_synt_N"/>
    <property type="match status" value="1"/>
</dbReference>
<dbReference type="Pfam" id="PF05746">
    <property type="entry name" value="DALR_1"/>
    <property type="match status" value="1"/>
</dbReference>
<dbReference type="Pfam" id="PF00750">
    <property type="entry name" value="tRNA-synt_1d"/>
    <property type="match status" value="1"/>
</dbReference>
<dbReference type="PRINTS" id="PR01038">
    <property type="entry name" value="TRNASYNTHARG"/>
</dbReference>
<dbReference type="SMART" id="SM01016">
    <property type="entry name" value="Arg_tRNA_synt_N"/>
    <property type="match status" value="1"/>
</dbReference>
<dbReference type="SMART" id="SM00836">
    <property type="entry name" value="DALR_1"/>
    <property type="match status" value="1"/>
</dbReference>
<dbReference type="SUPFAM" id="SSF47323">
    <property type="entry name" value="Anticodon-binding domain of a subclass of class I aminoacyl-tRNA synthetases"/>
    <property type="match status" value="1"/>
</dbReference>
<dbReference type="SUPFAM" id="SSF55190">
    <property type="entry name" value="Arginyl-tRNA synthetase (ArgRS), N-terminal 'additional' domain"/>
    <property type="match status" value="1"/>
</dbReference>
<dbReference type="SUPFAM" id="SSF52374">
    <property type="entry name" value="Nucleotidylyl transferase"/>
    <property type="match status" value="1"/>
</dbReference>
<dbReference type="PROSITE" id="PS00178">
    <property type="entry name" value="AA_TRNA_LIGASE_I"/>
    <property type="match status" value="1"/>
</dbReference>
<gene>
    <name evidence="1" type="primary">argS</name>
    <name type="ordered locus">FTH_1544</name>
</gene>